<keyword id="KW-0627">Porphyrin biosynthesis</keyword>
<keyword id="KW-0808">Transferase</keyword>
<gene>
    <name evidence="1" type="primary">hemC</name>
    <name type="ordered locus">CPF_1688</name>
</gene>
<feature type="chain" id="PRO_0000304228" description="Porphobilinogen deaminase">
    <location>
        <begin position="1"/>
        <end position="291"/>
    </location>
</feature>
<feature type="modified residue" description="S-(dipyrrolylmethanemethyl)cysteine" evidence="1">
    <location>
        <position position="237"/>
    </location>
</feature>
<comment type="function">
    <text evidence="1">Tetrapolymerization of the monopyrrole PBG into the hydroxymethylbilane pre-uroporphyrinogen in several discrete steps.</text>
</comment>
<comment type="catalytic activity">
    <reaction evidence="1">
        <text>4 porphobilinogen + H2O = hydroxymethylbilane + 4 NH4(+)</text>
        <dbReference type="Rhea" id="RHEA:13185"/>
        <dbReference type="ChEBI" id="CHEBI:15377"/>
        <dbReference type="ChEBI" id="CHEBI:28938"/>
        <dbReference type="ChEBI" id="CHEBI:57845"/>
        <dbReference type="ChEBI" id="CHEBI:58126"/>
        <dbReference type="EC" id="2.5.1.61"/>
    </reaction>
</comment>
<comment type="cofactor">
    <cofactor evidence="1">
        <name>dipyrromethane</name>
        <dbReference type="ChEBI" id="CHEBI:60342"/>
    </cofactor>
    <text evidence="1">Binds 1 dipyrromethane group covalently.</text>
</comment>
<comment type="pathway">
    <text evidence="1">Porphyrin-containing compound metabolism; protoporphyrin-IX biosynthesis; coproporphyrinogen-III from 5-aminolevulinate: step 2/4.</text>
</comment>
<comment type="subunit">
    <text evidence="1">Monomer.</text>
</comment>
<comment type="miscellaneous">
    <text evidence="1">The porphobilinogen subunits are added to the dipyrromethane group.</text>
</comment>
<comment type="similarity">
    <text evidence="1">Belongs to the HMBS family.</text>
</comment>
<reference key="1">
    <citation type="journal article" date="2006" name="Genome Res.">
        <title>Skewed genomic variability in strains of the toxigenic bacterial pathogen, Clostridium perfringens.</title>
        <authorList>
            <person name="Myers G.S.A."/>
            <person name="Rasko D.A."/>
            <person name="Cheung J.K."/>
            <person name="Ravel J."/>
            <person name="Seshadri R."/>
            <person name="DeBoy R.T."/>
            <person name="Ren Q."/>
            <person name="Varga J."/>
            <person name="Awad M.M."/>
            <person name="Brinkac L.M."/>
            <person name="Daugherty S.C."/>
            <person name="Haft D.H."/>
            <person name="Dodson R.J."/>
            <person name="Madupu R."/>
            <person name="Nelson W.C."/>
            <person name="Rosovitz M.J."/>
            <person name="Sullivan S.A."/>
            <person name="Khouri H."/>
            <person name="Dimitrov G.I."/>
            <person name="Watkins K.L."/>
            <person name="Mulligan S."/>
            <person name="Benton J."/>
            <person name="Radune D."/>
            <person name="Fisher D.J."/>
            <person name="Atkins H.S."/>
            <person name="Hiscox T."/>
            <person name="Jost B.H."/>
            <person name="Billington S.J."/>
            <person name="Songer J.G."/>
            <person name="McClane B.A."/>
            <person name="Titball R.W."/>
            <person name="Rood J.I."/>
            <person name="Melville S.B."/>
            <person name="Paulsen I.T."/>
        </authorList>
    </citation>
    <scope>NUCLEOTIDE SEQUENCE [LARGE SCALE GENOMIC DNA]</scope>
    <source>
        <strain>ATCC 13124 / DSM 756 / JCM 1290 / NCIMB 6125 / NCTC 8237 / S 107 / Type A</strain>
    </source>
</reference>
<accession>Q0TQG4</accession>
<evidence type="ECO:0000255" key="1">
    <source>
        <dbReference type="HAMAP-Rule" id="MF_00260"/>
    </source>
</evidence>
<dbReference type="EC" id="2.5.1.61" evidence="1"/>
<dbReference type="EMBL" id="CP000246">
    <property type="protein sequence ID" value="ABG84358.1"/>
    <property type="molecule type" value="Genomic_DNA"/>
</dbReference>
<dbReference type="RefSeq" id="WP_003454674.1">
    <property type="nucleotide sequence ID" value="NC_008261.1"/>
</dbReference>
<dbReference type="SMR" id="Q0TQG4"/>
<dbReference type="STRING" id="195103.CPF_1688"/>
<dbReference type="PaxDb" id="195103-CPF_1688"/>
<dbReference type="KEGG" id="cpf:CPF_1688"/>
<dbReference type="eggNOG" id="COG0181">
    <property type="taxonomic scope" value="Bacteria"/>
</dbReference>
<dbReference type="HOGENOM" id="CLU_019704_0_2_9"/>
<dbReference type="UniPathway" id="UPA00251">
    <property type="reaction ID" value="UER00319"/>
</dbReference>
<dbReference type="Proteomes" id="UP000001823">
    <property type="component" value="Chromosome"/>
</dbReference>
<dbReference type="GO" id="GO:0005737">
    <property type="term" value="C:cytoplasm"/>
    <property type="evidence" value="ECO:0007669"/>
    <property type="project" value="TreeGrafter"/>
</dbReference>
<dbReference type="GO" id="GO:0004418">
    <property type="term" value="F:hydroxymethylbilane synthase activity"/>
    <property type="evidence" value="ECO:0007669"/>
    <property type="project" value="UniProtKB-UniRule"/>
</dbReference>
<dbReference type="GO" id="GO:0006782">
    <property type="term" value="P:protoporphyrinogen IX biosynthetic process"/>
    <property type="evidence" value="ECO:0007669"/>
    <property type="project" value="UniProtKB-UniRule"/>
</dbReference>
<dbReference type="CDD" id="cd13647">
    <property type="entry name" value="PBP2_PBGD_2"/>
    <property type="match status" value="1"/>
</dbReference>
<dbReference type="FunFam" id="3.40.190.10:FF:000005">
    <property type="entry name" value="Porphobilinogen deaminase"/>
    <property type="match status" value="1"/>
</dbReference>
<dbReference type="Gene3D" id="3.40.190.10">
    <property type="entry name" value="Periplasmic binding protein-like II"/>
    <property type="match status" value="2"/>
</dbReference>
<dbReference type="Gene3D" id="3.30.160.40">
    <property type="entry name" value="Porphobilinogen deaminase, C-terminal domain"/>
    <property type="match status" value="1"/>
</dbReference>
<dbReference type="HAMAP" id="MF_00260">
    <property type="entry name" value="Porphobil_deam"/>
    <property type="match status" value="1"/>
</dbReference>
<dbReference type="InterPro" id="IPR000860">
    <property type="entry name" value="HemC"/>
</dbReference>
<dbReference type="InterPro" id="IPR022419">
    <property type="entry name" value="Porphobilin_deaminase_cofac_BS"/>
</dbReference>
<dbReference type="InterPro" id="IPR022417">
    <property type="entry name" value="Porphobilin_deaminase_N"/>
</dbReference>
<dbReference type="InterPro" id="IPR022418">
    <property type="entry name" value="Porphobilinogen_deaminase_C"/>
</dbReference>
<dbReference type="InterPro" id="IPR036803">
    <property type="entry name" value="Porphobilinogen_deaminase_C_sf"/>
</dbReference>
<dbReference type="NCBIfam" id="TIGR00212">
    <property type="entry name" value="hemC"/>
    <property type="match status" value="1"/>
</dbReference>
<dbReference type="PANTHER" id="PTHR11557">
    <property type="entry name" value="PORPHOBILINOGEN DEAMINASE"/>
    <property type="match status" value="1"/>
</dbReference>
<dbReference type="PANTHER" id="PTHR11557:SF0">
    <property type="entry name" value="PORPHOBILINOGEN DEAMINASE"/>
    <property type="match status" value="1"/>
</dbReference>
<dbReference type="Pfam" id="PF01379">
    <property type="entry name" value="Porphobil_deam"/>
    <property type="match status" value="1"/>
</dbReference>
<dbReference type="Pfam" id="PF03900">
    <property type="entry name" value="Porphobil_deamC"/>
    <property type="match status" value="1"/>
</dbReference>
<dbReference type="PIRSF" id="PIRSF001438">
    <property type="entry name" value="4pyrrol_synth_OHMeBilane_synth"/>
    <property type="match status" value="1"/>
</dbReference>
<dbReference type="PRINTS" id="PR00151">
    <property type="entry name" value="PORPHBDMNASE"/>
</dbReference>
<dbReference type="SUPFAM" id="SSF53850">
    <property type="entry name" value="Periplasmic binding protein-like II"/>
    <property type="match status" value="1"/>
</dbReference>
<dbReference type="SUPFAM" id="SSF54782">
    <property type="entry name" value="Porphobilinogen deaminase (hydroxymethylbilane synthase), C-terminal domain"/>
    <property type="match status" value="1"/>
</dbReference>
<dbReference type="PROSITE" id="PS00533">
    <property type="entry name" value="PORPHOBILINOGEN_DEAM"/>
    <property type="match status" value="1"/>
</dbReference>
<name>HEM3_CLOP1</name>
<proteinExistence type="inferred from homology"/>
<sequence length="291" mass="32393">MELIIATRKSKLAQVQTEKVMELLKEKENVDSKKLLVMTEGDRRLDVSLNKIGGKGLFVKEIELALLNKEAHGAVHSMKDVPFELPSEFELVAMPEREDIRDAFVSLNGSTLSNLRKGARIGTSSIRRAEQLKLFRDDLEIVPIRGNVQTRIKKITEENLDGIILAAAGLKRLGMEDVISDYFDPKVFLPAIGQGALGIECLKGGEFNDYFKALDSKEVRTTVEAERSFMKVLNGGCHSLIGAYSEVKDNDLYMIGTFTVNNRIVKKDILGNKEDNILLGKKLAEKILGEV</sequence>
<protein>
    <recommendedName>
        <fullName evidence="1">Porphobilinogen deaminase</fullName>
        <shortName evidence="1">PBG</shortName>
        <ecNumber evidence="1">2.5.1.61</ecNumber>
    </recommendedName>
    <alternativeName>
        <fullName evidence="1">Hydroxymethylbilane synthase</fullName>
        <shortName evidence="1">HMBS</shortName>
    </alternativeName>
    <alternativeName>
        <fullName evidence="1">Pre-uroporphyrinogen synthase</fullName>
    </alternativeName>
</protein>
<organism>
    <name type="scientific">Clostridium perfringens (strain ATCC 13124 / DSM 756 / JCM 1290 / NCIMB 6125 / NCTC 8237 / Type A)</name>
    <dbReference type="NCBI Taxonomy" id="195103"/>
    <lineage>
        <taxon>Bacteria</taxon>
        <taxon>Bacillati</taxon>
        <taxon>Bacillota</taxon>
        <taxon>Clostridia</taxon>
        <taxon>Eubacteriales</taxon>
        <taxon>Clostridiaceae</taxon>
        <taxon>Clostridium</taxon>
    </lineage>
</organism>